<gene>
    <name evidence="1" type="primary">rhaR</name>
    <name type="ordered locus">YPA_3949</name>
</gene>
<reference key="1">
    <citation type="journal article" date="2006" name="J. Bacteriol.">
        <title>Complete genome sequence of Yersinia pestis strains Antiqua and Nepal516: evidence of gene reduction in an emerging pathogen.</title>
        <authorList>
            <person name="Chain P.S.G."/>
            <person name="Hu P."/>
            <person name="Malfatti S.A."/>
            <person name="Radnedge L."/>
            <person name="Larimer F."/>
            <person name="Vergez L.M."/>
            <person name="Worsham P."/>
            <person name="Chu M.C."/>
            <person name="Andersen G.L."/>
        </authorList>
    </citation>
    <scope>NUCLEOTIDE SEQUENCE [LARGE SCALE GENOMIC DNA]</scope>
    <source>
        <strain>Antiqua</strain>
    </source>
</reference>
<protein>
    <recommendedName>
        <fullName evidence="1">HTH-type transcriptional activator RhaR</fullName>
    </recommendedName>
    <alternativeName>
        <fullName evidence="1">L-rhamnose operon transcriptional activator RhaR</fullName>
    </alternativeName>
</protein>
<dbReference type="EMBL" id="CP000308">
    <property type="protein sequence ID" value="ABG15910.1"/>
    <property type="molecule type" value="Genomic_DNA"/>
</dbReference>
<dbReference type="RefSeq" id="WP_002209110.1">
    <property type="nucleotide sequence ID" value="NZ_CP009906.1"/>
</dbReference>
<dbReference type="SMR" id="Q1C0W2"/>
<dbReference type="GeneID" id="57974272"/>
<dbReference type="KEGG" id="ypa:YPA_3949"/>
<dbReference type="Proteomes" id="UP000001971">
    <property type="component" value="Chromosome"/>
</dbReference>
<dbReference type="GO" id="GO:0005737">
    <property type="term" value="C:cytoplasm"/>
    <property type="evidence" value="ECO:0007669"/>
    <property type="project" value="UniProtKB-SubCell"/>
</dbReference>
<dbReference type="GO" id="GO:0003700">
    <property type="term" value="F:DNA-binding transcription factor activity"/>
    <property type="evidence" value="ECO:0007669"/>
    <property type="project" value="UniProtKB-UniRule"/>
</dbReference>
<dbReference type="GO" id="GO:0043565">
    <property type="term" value="F:sequence-specific DNA binding"/>
    <property type="evidence" value="ECO:0007669"/>
    <property type="project" value="InterPro"/>
</dbReference>
<dbReference type="GO" id="GO:0045893">
    <property type="term" value="P:positive regulation of DNA-templated transcription"/>
    <property type="evidence" value="ECO:0007669"/>
    <property type="project" value="UniProtKB-UniRule"/>
</dbReference>
<dbReference type="GO" id="GO:0019299">
    <property type="term" value="P:rhamnose metabolic process"/>
    <property type="evidence" value="ECO:0007669"/>
    <property type="project" value="UniProtKB-UniRule"/>
</dbReference>
<dbReference type="CDD" id="cd06977">
    <property type="entry name" value="cupin_RhaR_RhaS-like_N"/>
    <property type="match status" value="1"/>
</dbReference>
<dbReference type="Gene3D" id="1.10.10.60">
    <property type="entry name" value="Homeodomain-like"/>
    <property type="match status" value="1"/>
</dbReference>
<dbReference type="Gene3D" id="2.60.120.10">
    <property type="entry name" value="Jelly Rolls"/>
    <property type="match status" value="1"/>
</dbReference>
<dbReference type="HAMAP" id="MF_01533">
    <property type="entry name" value="HTH_type_RhaR"/>
    <property type="match status" value="1"/>
</dbReference>
<dbReference type="InterPro" id="IPR003313">
    <property type="entry name" value="AraC-bd"/>
</dbReference>
<dbReference type="InterPro" id="IPR009057">
    <property type="entry name" value="Homeodomain-like_sf"/>
</dbReference>
<dbReference type="InterPro" id="IPR018060">
    <property type="entry name" value="HTH_AraC"/>
</dbReference>
<dbReference type="InterPro" id="IPR018062">
    <property type="entry name" value="HTH_AraC-typ_CS"/>
</dbReference>
<dbReference type="InterPro" id="IPR047220">
    <property type="entry name" value="RhaR_RhaS-like_N"/>
</dbReference>
<dbReference type="InterPro" id="IPR014710">
    <property type="entry name" value="RmlC-like_jellyroll"/>
</dbReference>
<dbReference type="InterPro" id="IPR011051">
    <property type="entry name" value="RmlC_Cupin_sf"/>
</dbReference>
<dbReference type="InterPro" id="IPR023699">
    <property type="entry name" value="Tscrpt_act_RhaR"/>
</dbReference>
<dbReference type="InterPro" id="IPR020449">
    <property type="entry name" value="Tscrpt_reg_AraC-type_HTH"/>
</dbReference>
<dbReference type="NCBIfam" id="NF010026">
    <property type="entry name" value="PRK13501.1"/>
    <property type="match status" value="1"/>
</dbReference>
<dbReference type="PANTHER" id="PTHR43280">
    <property type="entry name" value="ARAC-FAMILY TRANSCRIPTIONAL REGULATOR"/>
    <property type="match status" value="1"/>
</dbReference>
<dbReference type="PANTHER" id="PTHR43280:SF13">
    <property type="entry name" value="HTH-TYPE TRANSCRIPTIONAL ACTIVATOR RHAR"/>
    <property type="match status" value="1"/>
</dbReference>
<dbReference type="Pfam" id="PF02311">
    <property type="entry name" value="AraC_binding"/>
    <property type="match status" value="1"/>
</dbReference>
<dbReference type="Pfam" id="PF12833">
    <property type="entry name" value="HTH_18"/>
    <property type="match status" value="1"/>
</dbReference>
<dbReference type="PRINTS" id="PR00032">
    <property type="entry name" value="HTHARAC"/>
</dbReference>
<dbReference type="SMART" id="SM00342">
    <property type="entry name" value="HTH_ARAC"/>
    <property type="match status" value="1"/>
</dbReference>
<dbReference type="SUPFAM" id="SSF46689">
    <property type="entry name" value="Homeodomain-like"/>
    <property type="match status" value="1"/>
</dbReference>
<dbReference type="SUPFAM" id="SSF51182">
    <property type="entry name" value="RmlC-like cupins"/>
    <property type="match status" value="1"/>
</dbReference>
<dbReference type="PROSITE" id="PS00041">
    <property type="entry name" value="HTH_ARAC_FAMILY_1"/>
    <property type="match status" value="1"/>
</dbReference>
<dbReference type="PROSITE" id="PS01124">
    <property type="entry name" value="HTH_ARAC_FAMILY_2"/>
    <property type="match status" value="1"/>
</dbReference>
<feature type="chain" id="PRO_0000292776" description="HTH-type transcriptional activator RhaR">
    <location>
        <begin position="1"/>
        <end position="290"/>
    </location>
</feature>
<feature type="domain" description="HTH araC/xylS-type" evidence="1">
    <location>
        <begin position="179"/>
        <end position="277"/>
    </location>
</feature>
<feature type="DNA-binding region" description="H-T-H motif" evidence="1">
    <location>
        <begin position="196"/>
        <end position="217"/>
    </location>
</feature>
<feature type="DNA-binding region" description="H-T-H motif" evidence="1">
    <location>
        <begin position="244"/>
        <end position="267"/>
    </location>
</feature>
<feature type="site" description="Interaction with sigma-70" evidence="1">
    <location>
        <position position="246"/>
    </location>
</feature>
<name>RHAR_YERPA</name>
<comment type="function">
    <text evidence="1">Activates expression of the rhaSR operon in response to L-rhamnose.</text>
</comment>
<comment type="subunit">
    <text evidence="1">Binds DNA as a dimer.</text>
</comment>
<comment type="subcellular location">
    <subcellularLocation>
        <location evidence="1">Cytoplasm</location>
    </subcellularLocation>
</comment>
<accession>Q1C0W2</accession>
<keyword id="KW-0010">Activator</keyword>
<keyword id="KW-0963">Cytoplasm</keyword>
<keyword id="KW-0238">DNA-binding</keyword>
<keyword id="KW-0677">Repeat</keyword>
<keyword id="KW-0684">Rhamnose metabolism</keyword>
<keyword id="KW-0804">Transcription</keyword>
<keyword id="KW-0805">Transcription regulation</keyword>
<organism>
    <name type="scientific">Yersinia pestis bv. Antiqua (strain Antiqua)</name>
    <dbReference type="NCBI Taxonomy" id="360102"/>
    <lineage>
        <taxon>Bacteria</taxon>
        <taxon>Pseudomonadati</taxon>
        <taxon>Pseudomonadota</taxon>
        <taxon>Gammaproteobacteria</taxon>
        <taxon>Enterobacterales</taxon>
        <taxon>Yersiniaceae</taxon>
        <taxon>Yersinia</taxon>
    </lineage>
</organism>
<sequence>MRAPLLLESRDYLLSEQMPVAVTNRYPQETFVEHTHQFCEIVIVWRGNGLHVLNDHPYRITCGDVFYIQAADHHSYESVHDLVLDNIIYCPERLHLNAQWHKLLPPLGPEQNQGYWRLTTQGMAQARPIIQQLAQESRKTDSWSIQLTEVLLLQLAIVLKRHRYRAEQAHLLPDGEQLDLIMSALQQSLGAYFDMADFCHKNQLVERSLKQLFRQQTGMSISHYLRQIRLCHAKCLLRGSEHRISDIAARCGFEDSNYFSAVFTREAGMTPRDYRQRFIRSPVLPAKNEP</sequence>
<evidence type="ECO:0000255" key="1">
    <source>
        <dbReference type="HAMAP-Rule" id="MF_01533"/>
    </source>
</evidence>
<proteinExistence type="inferred from homology"/>